<name>MYG_MELGA</name>
<dbReference type="EC" id="1.7.-.-" evidence="1"/>
<dbReference type="EC" id="1.11.1.-" evidence="1"/>
<dbReference type="RefSeq" id="XP_003202395.1">
    <property type="nucleotide sequence ID" value="XM_003202347.4"/>
</dbReference>
<dbReference type="SMR" id="G1NJB6"/>
<dbReference type="FunCoup" id="G1NJB6">
    <property type="interactions" value="428"/>
</dbReference>
<dbReference type="Ensembl" id="ENSMGAT00000014318.3">
    <property type="protein sequence ID" value="ENSMGAP00000013412.2"/>
    <property type="gene ID" value="ENSMGAG00000012726.3"/>
</dbReference>
<dbReference type="GeneID" id="100539180"/>
<dbReference type="KEGG" id="mgp:100539180"/>
<dbReference type="CTD" id="4151"/>
<dbReference type="GeneTree" id="ENSGT00940000157534"/>
<dbReference type="HOGENOM" id="CLU_003827_18_0_1"/>
<dbReference type="InParanoid" id="G1NJB6"/>
<dbReference type="OMA" id="VIIRMFQ"/>
<dbReference type="OrthoDB" id="6344802at2759"/>
<dbReference type="TreeFam" id="TF332967"/>
<dbReference type="Proteomes" id="UP000001645">
    <property type="component" value="Chromosome 1"/>
</dbReference>
<dbReference type="Bgee" id="ENSMGAG00000012726">
    <property type="expression patterns" value="Expressed in gizzard and 10 other cell types or tissues"/>
</dbReference>
<dbReference type="GO" id="GO:0070062">
    <property type="term" value="C:extracellular exosome"/>
    <property type="evidence" value="ECO:0007669"/>
    <property type="project" value="TreeGrafter"/>
</dbReference>
<dbReference type="GO" id="GO:0016528">
    <property type="term" value="C:sarcoplasm"/>
    <property type="evidence" value="ECO:0000250"/>
    <property type="project" value="UniProtKB"/>
</dbReference>
<dbReference type="GO" id="GO:0020037">
    <property type="term" value="F:heme binding"/>
    <property type="evidence" value="ECO:0007669"/>
    <property type="project" value="InterPro"/>
</dbReference>
<dbReference type="GO" id="GO:0046872">
    <property type="term" value="F:metal ion binding"/>
    <property type="evidence" value="ECO:0007669"/>
    <property type="project" value="UniProtKB-KW"/>
</dbReference>
<dbReference type="GO" id="GO:0098809">
    <property type="term" value="F:nitrite reductase activity"/>
    <property type="evidence" value="ECO:0000250"/>
    <property type="project" value="UniProtKB"/>
</dbReference>
<dbReference type="GO" id="GO:0019825">
    <property type="term" value="F:oxygen binding"/>
    <property type="evidence" value="ECO:0007669"/>
    <property type="project" value="InterPro"/>
</dbReference>
<dbReference type="GO" id="GO:0005344">
    <property type="term" value="F:oxygen carrier activity"/>
    <property type="evidence" value="ECO:0000250"/>
    <property type="project" value="UniProtKB"/>
</dbReference>
<dbReference type="GO" id="GO:0004601">
    <property type="term" value="F:peroxidase activity"/>
    <property type="evidence" value="ECO:0000250"/>
    <property type="project" value="UniProtKB"/>
</dbReference>
<dbReference type="GO" id="GO:0019430">
    <property type="term" value="P:removal of superoxide radicals"/>
    <property type="evidence" value="ECO:0000250"/>
    <property type="project" value="UniProtKB"/>
</dbReference>
<dbReference type="Gene3D" id="6.10.140.2100">
    <property type="match status" value="1"/>
</dbReference>
<dbReference type="Gene3D" id="6.10.140.2110">
    <property type="match status" value="1"/>
</dbReference>
<dbReference type="InterPro" id="IPR000971">
    <property type="entry name" value="Globin"/>
</dbReference>
<dbReference type="InterPro" id="IPR009050">
    <property type="entry name" value="Globin-like_sf"/>
</dbReference>
<dbReference type="InterPro" id="IPR002335">
    <property type="entry name" value="Myoglobin"/>
</dbReference>
<dbReference type="PANTHER" id="PTHR47132">
    <property type="entry name" value="MYOGLOBIN"/>
    <property type="match status" value="1"/>
</dbReference>
<dbReference type="PANTHER" id="PTHR47132:SF1">
    <property type="entry name" value="MYOGLOBIN"/>
    <property type="match status" value="1"/>
</dbReference>
<dbReference type="Pfam" id="PF00042">
    <property type="entry name" value="Globin"/>
    <property type="match status" value="1"/>
</dbReference>
<dbReference type="PRINTS" id="PR00613">
    <property type="entry name" value="MYOGLOBIN"/>
</dbReference>
<dbReference type="SUPFAM" id="SSF46458">
    <property type="entry name" value="Globin-like"/>
    <property type="match status" value="1"/>
</dbReference>
<dbReference type="PROSITE" id="PS01033">
    <property type="entry name" value="GLOBIN"/>
    <property type="match status" value="1"/>
</dbReference>
<organism>
    <name type="scientific">Meleagris gallopavo</name>
    <name type="common">Wild turkey</name>
    <dbReference type="NCBI Taxonomy" id="9103"/>
    <lineage>
        <taxon>Eukaryota</taxon>
        <taxon>Metazoa</taxon>
        <taxon>Chordata</taxon>
        <taxon>Craniata</taxon>
        <taxon>Vertebrata</taxon>
        <taxon>Euteleostomi</taxon>
        <taxon>Archelosauria</taxon>
        <taxon>Archosauria</taxon>
        <taxon>Dinosauria</taxon>
        <taxon>Saurischia</taxon>
        <taxon>Theropoda</taxon>
        <taxon>Coelurosauria</taxon>
        <taxon>Aves</taxon>
        <taxon>Neognathae</taxon>
        <taxon>Galloanserae</taxon>
        <taxon>Galliformes</taxon>
        <taxon>Phasianidae</taxon>
        <taxon>Meleagridinae</taxon>
        <taxon>Meleagris</taxon>
    </lineage>
</organism>
<evidence type="ECO:0000250" key="1">
    <source>
        <dbReference type="UniProtKB" id="P02144"/>
    </source>
</evidence>
<evidence type="ECO:0000250" key="2">
    <source>
        <dbReference type="UniProtKB" id="P02185"/>
    </source>
</evidence>
<evidence type="ECO:0000250" key="3">
    <source>
        <dbReference type="UniProtKB" id="P02189"/>
    </source>
</evidence>
<evidence type="ECO:0000250" key="4">
    <source>
        <dbReference type="UniProtKB" id="P68082"/>
    </source>
</evidence>
<evidence type="ECO:0000255" key="5">
    <source>
        <dbReference type="PROSITE-ProRule" id="PRU00238"/>
    </source>
</evidence>
<evidence type="ECO:0000269" key="6">
    <source ref="2"/>
</evidence>
<evidence type="ECO:0000269" key="7">
    <source ref="3"/>
</evidence>
<evidence type="ECO:0000303" key="8">
    <source ref="2"/>
</evidence>
<evidence type="ECO:0000303" key="9">
    <source ref="3"/>
</evidence>
<evidence type="ECO:0000305" key="10"/>
<reference key="1">
    <citation type="journal article" date="2010" name="PLoS Biol.">
        <title>Multi-platform next-generation sequencing of the domestic turkey (Meleagris gallopavo): genome assembly and analysis.</title>
        <authorList>
            <person name="Dalloul R.A."/>
            <person name="Long J.A."/>
            <person name="Zimin A.V."/>
            <person name="Aslam L."/>
            <person name="Beal K."/>
            <person name="Blomberg L.A."/>
            <person name="Bouffard P."/>
            <person name="Burt D.W."/>
            <person name="Crasta O."/>
            <person name="Crooijmans R.P."/>
            <person name="Cooper K."/>
            <person name="Coulombe R.A."/>
            <person name="De S."/>
            <person name="Delany M.E."/>
            <person name="Dodgson J.B."/>
            <person name="Dong J.J."/>
            <person name="Evans C."/>
            <person name="Frederickson K.M."/>
            <person name="Flicek P."/>
            <person name="Florea L."/>
            <person name="Folkerts O."/>
            <person name="Groenen M.A."/>
            <person name="Harkins T.T."/>
            <person name="Herrero J."/>
            <person name="Hoffmann S."/>
            <person name="Megens H.J."/>
            <person name="Jiang A."/>
            <person name="de Jong P."/>
            <person name="Kaiser P."/>
            <person name="Kim H."/>
            <person name="Kim K.W."/>
            <person name="Kim S."/>
            <person name="Langenberger D."/>
            <person name="Lee M.K."/>
            <person name="Lee T."/>
            <person name="Mane S."/>
            <person name="Marcais G."/>
            <person name="Marz M."/>
            <person name="McElroy A.P."/>
            <person name="Modise T."/>
            <person name="Nefedov M."/>
            <person name="Notredame C."/>
            <person name="Paton I.R."/>
            <person name="Payne W.S."/>
            <person name="Pertea G."/>
            <person name="Prickett D."/>
            <person name="Puiu D."/>
            <person name="Qioa D."/>
            <person name="Raineri E."/>
            <person name="Ruffier M."/>
            <person name="Salzberg S.L."/>
            <person name="Schatz M.C."/>
            <person name="Scheuring C."/>
            <person name="Schmidt C.J."/>
            <person name="Schroeder S."/>
            <person name="Searle S.M."/>
            <person name="Smith E.J."/>
            <person name="Smith J."/>
            <person name="Sonstegard T.S."/>
            <person name="Stadler P.F."/>
            <person name="Tafer H."/>
            <person name="Tu Z.J."/>
            <person name="Van Tassell C.P."/>
            <person name="Vilella A.J."/>
            <person name="Williams K.P."/>
            <person name="Yorke J.A."/>
            <person name="Zhang L."/>
            <person name="Zhang H.B."/>
            <person name="Zhang X."/>
            <person name="Zhang Y."/>
            <person name="Reed K.M."/>
        </authorList>
    </citation>
    <scope>NUCLEOTIDE SEQUENCE [LARGE SCALE GENOMIC DNA]</scope>
</reference>
<reference evidence="10" key="2">
    <citation type="journal article" date="2011" name="Food Chem.">
        <title>Primary structure of turkey myoglobin.</title>
        <authorList>
            <person name="Joseph P."/>
            <person name="Suman S.P."/>
            <person name="Li S."/>
            <person name="Claus J.R."/>
            <person name="Fontaine M."/>
            <person name="Steinke L."/>
        </authorList>
    </citation>
    <scope>PROTEIN SEQUENCE OF 2-154</scope>
    <source>
        <tissue evidence="6">Heart muscle</tissue>
    </source>
</reference>
<reference evidence="10" key="3">
    <citation type="journal article" date="2010" name="LWT Food Sci. Technol.">
        <title>Mass spectrometric characterization and thermostability of turkey myoglobin.</title>
        <authorList>
            <person name="Joseph P."/>
            <person name="Suman S.P."/>
            <person name="Li S."/>
            <person name="Beach C.M."/>
            <person name="Claus J.R."/>
        </authorList>
    </citation>
    <scope>MASS SPECTROMETRY</scope>
    <source>
        <tissue evidence="7">Heart muscle</tissue>
    </source>
</reference>
<keyword id="KW-0963">Cytoplasm</keyword>
<keyword id="KW-0903">Direct protein sequencing</keyword>
<keyword id="KW-0349">Heme</keyword>
<keyword id="KW-0408">Iron</keyword>
<keyword id="KW-0479">Metal-binding</keyword>
<keyword id="KW-0514">Muscle protein</keyword>
<keyword id="KW-0560">Oxidoreductase</keyword>
<keyword id="KW-0561">Oxygen transport</keyword>
<keyword id="KW-1185">Reference proteome</keyword>
<keyword id="KW-0813">Transport</keyword>
<protein>
    <recommendedName>
        <fullName evidence="8 9">Myoglobin</fullName>
    </recommendedName>
    <alternativeName>
        <fullName evidence="1">Nitrite reductase MB</fullName>
        <ecNumber evidence="1">1.7.-.-</ecNumber>
    </alternativeName>
    <alternativeName>
        <fullName evidence="1">Pseudoperoxidase MB</fullName>
        <ecNumber evidence="1">1.11.1.-</ecNumber>
    </alternativeName>
</protein>
<feature type="initiator methionine" description="Removed" evidence="6">
    <location>
        <position position="1"/>
    </location>
</feature>
<feature type="chain" id="PRO_0000415950" description="Myoglobin" evidence="6">
    <location>
        <begin position="2"/>
        <end position="154"/>
    </location>
</feature>
<feature type="domain" description="Globin" evidence="5">
    <location>
        <begin position="2"/>
        <end position="148"/>
    </location>
</feature>
<feature type="binding site" evidence="4">
    <location>
        <position position="65"/>
    </location>
    <ligand>
        <name>nitrite</name>
        <dbReference type="ChEBI" id="CHEBI:16301"/>
    </ligand>
</feature>
<feature type="binding site" evidence="3 5">
    <location>
        <position position="65"/>
    </location>
    <ligand>
        <name>O2</name>
        <dbReference type="ChEBI" id="CHEBI:15379"/>
    </ligand>
</feature>
<feature type="binding site" description="proximal binding residue" evidence="1">
    <location>
        <position position="94"/>
    </location>
    <ligand>
        <name>heme b</name>
        <dbReference type="ChEBI" id="CHEBI:60344"/>
    </ligand>
    <ligandPart>
        <name>Fe</name>
        <dbReference type="ChEBI" id="CHEBI:18248"/>
    </ligandPart>
</feature>
<proteinExistence type="evidence at protein level"/>
<sequence>MGLSDQEWQQVLTIWGKVEADIAGHGHEVLMRLFHDHPETLDRFDKFKGLKTPDQMKGSEDLKKHGATVLTQLGKILKQKGNHESELKPLAQTHATKHKIPVKYLEFISEVIIKVIAEKHAADFGADSQAAMKKALELFRNDMASKYKEFGFQG</sequence>
<comment type="function">
    <text evidence="1">Monomeric heme protein which primary function is to store oxygen and facilitate its diffusion within muscle tissues. Reversibly binds oxygen through a pentacoordinated heme iron and enables its timely and efficient release as needed during periods of heightened demand. Depending on the oxidative conditions of tissues and cells, and in addition to its ability to bind oxygen, it also has a nitrite reductase activity whereby it regulates the production of bioactive nitric oxide. Under stress conditions, like hypoxia and anoxia, it also protects cells against reactive oxygen species thanks to its pseudoperoxidase activity.</text>
</comment>
<comment type="catalytic activity">
    <reaction evidence="1">
        <text>Fe(III)-heme b-[protein] + nitric oxide + H2O = Fe(II)-heme b-[protein] + nitrite + 2 H(+)</text>
        <dbReference type="Rhea" id="RHEA:77711"/>
        <dbReference type="Rhea" id="RHEA-COMP:18975"/>
        <dbReference type="Rhea" id="RHEA-COMP:18976"/>
        <dbReference type="ChEBI" id="CHEBI:15377"/>
        <dbReference type="ChEBI" id="CHEBI:15378"/>
        <dbReference type="ChEBI" id="CHEBI:16301"/>
        <dbReference type="ChEBI" id="CHEBI:16480"/>
        <dbReference type="ChEBI" id="CHEBI:55376"/>
        <dbReference type="ChEBI" id="CHEBI:60344"/>
    </reaction>
    <physiologicalReaction direction="right-to-left" evidence="1">
        <dbReference type="Rhea" id="RHEA:77713"/>
    </physiologicalReaction>
</comment>
<comment type="catalytic activity">
    <reaction evidence="1">
        <text>H2O2 + AH2 = A + 2 H2O</text>
        <dbReference type="Rhea" id="RHEA:30275"/>
        <dbReference type="ChEBI" id="CHEBI:13193"/>
        <dbReference type="ChEBI" id="CHEBI:15377"/>
        <dbReference type="ChEBI" id="CHEBI:16240"/>
        <dbReference type="ChEBI" id="CHEBI:17499"/>
    </reaction>
</comment>
<comment type="subunit">
    <text evidence="2">Monomeric.</text>
</comment>
<comment type="subcellular location">
    <subcellularLocation>
        <location evidence="1">Cytoplasm</location>
        <location evidence="1">Sarcoplasm</location>
    </subcellularLocation>
</comment>
<comment type="mass spectrometry"/>
<comment type="similarity">
    <text evidence="5">Belongs to the globin family.</text>
</comment>
<gene>
    <name type="primary">MB</name>
</gene>
<accession>G1NJB6</accession>